<dbReference type="EC" id="6.1.1.3" evidence="1"/>
<dbReference type="EMBL" id="CP001358">
    <property type="protein sequence ID" value="ACL48402.1"/>
    <property type="molecule type" value="Genomic_DNA"/>
</dbReference>
<dbReference type="SMR" id="B8J4E4"/>
<dbReference type="STRING" id="525146.Ddes_0490"/>
<dbReference type="KEGG" id="dds:Ddes_0490"/>
<dbReference type="eggNOG" id="COG0441">
    <property type="taxonomic scope" value="Bacteria"/>
</dbReference>
<dbReference type="HOGENOM" id="CLU_008554_3_1_7"/>
<dbReference type="GO" id="GO:0005829">
    <property type="term" value="C:cytosol"/>
    <property type="evidence" value="ECO:0007669"/>
    <property type="project" value="TreeGrafter"/>
</dbReference>
<dbReference type="GO" id="GO:0005524">
    <property type="term" value="F:ATP binding"/>
    <property type="evidence" value="ECO:0007669"/>
    <property type="project" value="UniProtKB-UniRule"/>
</dbReference>
<dbReference type="GO" id="GO:0046872">
    <property type="term" value="F:metal ion binding"/>
    <property type="evidence" value="ECO:0007669"/>
    <property type="project" value="UniProtKB-KW"/>
</dbReference>
<dbReference type="GO" id="GO:0004829">
    <property type="term" value="F:threonine-tRNA ligase activity"/>
    <property type="evidence" value="ECO:0007669"/>
    <property type="project" value="UniProtKB-UniRule"/>
</dbReference>
<dbReference type="GO" id="GO:0000049">
    <property type="term" value="F:tRNA binding"/>
    <property type="evidence" value="ECO:0007669"/>
    <property type="project" value="UniProtKB-KW"/>
</dbReference>
<dbReference type="GO" id="GO:0006435">
    <property type="term" value="P:threonyl-tRNA aminoacylation"/>
    <property type="evidence" value="ECO:0007669"/>
    <property type="project" value="UniProtKB-UniRule"/>
</dbReference>
<dbReference type="CDD" id="cd00860">
    <property type="entry name" value="ThrRS_anticodon"/>
    <property type="match status" value="1"/>
</dbReference>
<dbReference type="CDD" id="cd00771">
    <property type="entry name" value="ThrRS_core"/>
    <property type="match status" value="1"/>
</dbReference>
<dbReference type="FunFam" id="3.30.54.20:FF:000002">
    <property type="entry name" value="Threonine--tRNA ligase"/>
    <property type="match status" value="1"/>
</dbReference>
<dbReference type="FunFam" id="3.30.930.10:FF:000002">
    <property type="entry name" value="Threonine--tRNA ligase"/>
    <property type="match status" value="1"/>
</dbReference>
<dbReference type="FunFam" id="3.40.50.800:FF:000001">
    <property type="entry name" value="Threonine--tRNA ligase"/>
    <property type="match status" value="1"/>
</dbReference>
<dbReference type="FunFam" id="3.30.980.10:FF:000005">
    <property type="entry name" value="Threonyl-tRNA synthetase, mitochondrial"/>
    <property type="match status" value="1"/>
</dbReference>
<dbReference type="Gene3D" id="3.30.54.20">
    <property type="match status" value="1"/>
</dbReference>
<dbReference type="Gene3D" id="3.40.50.800">
    <property type="entry name" value="Anticodon-binding domain"/>
    <property type="match status" value="1"/>
</dbReference>
<dbReference type="Gene3D" id="3.30.930.10">
    <property type="entry name" value="Bira Bifunctional Protein, Domain 2"/>
    <property type="match status" value="1"/>
</dbReference>
<dbReference type="Gene3D" id="3.30.980.10">
    <property type="entry name" value="Threonyl-trna Synthetase, Chain A, domain 2"/>
    <property type="match status" value="1"/>
</dbReference>
<dbReference type="HAMAP" id="MF_00184">
    <property type="entry name" value="Thr_tRNA_synth"/>
    <property type="match status" value="1"/>
</dbReference>
<dbReference type="InterPro" id="IPR002314">
    <property type="entry name" value="aa-tRNA-synt_IIb"/>
</dbReference>
<dbReference type="InterPro" id="IPR006195">
    <property type="entry name" value="aa-tRNA-synth_II"/>
</dbReference>
<dbReference type="InterPro" id="IPR045864">
    <property type="entry name" value="aa-tRNA-synth_II/BPL/LPL"/>
</dbReference>
<dbReference type="InterPro" id="IPR004154">
    <property type="entry name" value="Anticodon-bd"/>
</dbReference>
<dbReference type="InterPro" id="IPR036621">
    <property type="entry name" value="Anticodon-bd_dom_sf"/>
</dbReference>
<dbReference type="InterPro" id="IPR004095">
    <property type="entry name" value="TGS"/>
</dbReference>
<dbReference type="InterPro" id="IPR002320">
    <property type="entry name" value="Thr-tRNA-ligase_IIa"/>
</dbReference>
<dbReference type="InterPro" id="IPR018163">
    <property type="entry name" value="Thr/Ala-tRNA-synth_IIc_edit"/>
</dbReference>
<dbReference type="InterPro" id="IPR047246">
    <property type="entry name" value="ThrRS_anticodon"/>
</dbReference>
<dbReference type="InterPro" id="IPR033728">
    <property type="entry name" value="ThrRS_core"/>
</dbReference>
<dbReference type="InterPro" id="IPR012947">
    <property type="entry name" value="tRNA_SAD"/>
</dbReference>
<dbReference type="NCBIfam" id="TIGR00418">
    <property type="entry name" value="thrS"/>
    <property type="match status" value="1"/>
</dbReference>
<dbReference type="PANTHER" id="PTHR11451:SF44">
    <property type="entry name" value="THREONINE--TRNA LIGASE, CHLOROPLASTIC_MITOCHONDRIAL 2"/>
    <property type="match status" value="1"/>
</dbReference>
<dbReference type="PANTHER" id="PTHR11451">
    <property type="entry name" value="THREONINE-TRNA LIGASE"/>
    <property type="match status" value="1"/>
</dbReference>
<dbReference type="Pfam" id="PF03129">
    <property type="entry name" value="HGTP_anticodon"/>
    <property type="match status" value="1"/>
</dbReference>
<dbReference type="Pfam" id="PF00587">
    <property type="entry name" value="tRNA-synt_2b"/>
    <property type="match status" value="1"/>
</dbReference>
<dbReference type="Pfam" id="PF07973">
    <property type="entry name" value="tRNA_SAD"/>
    <property type="match status" value="1"/>
</dbReference>
<dbReference type="PRINTS" id="PR01047">
    <property type="entry name" value="TRNASYNTHTHR"/>
</dbReference>
<dbReference type="SMART" id="SM00863">
    <property type="entry name" value="tRNA_SAD"/>
    <property type="match status" value="1"/>
</dbReference>
<dbReference type="SUPFAM" id="SSF52954">
    <property type="entry name" value="Class II aaRS ABD-related"/>
    <property type="match status" value="1"/>
</dbReference>
<dbReference type="SUPFAM" id="SSF55681">
    <property type="entry name" value="Class II aaRS and biotin synthetases"/>
    <property type="match status" value="1"/>
</dbReference>
<dbReference type="SUPFAM" id="SSF55186">
    <property type="entry name" value="ThrRS/AlaRS common domain"/>
    <property type="match status" value="1"/>
</dbReference>
<dbReference type="PROSITE" id="PS50862">
    <property type="entry name" value="AA_TRNA_LIGASE_II"/>
    <property type="match status" value="1"/>
</dbReference>
<dbReference type="PROSITE" id="PS51880">
    <property type="entry name" value="TGS"/>
    <property type="match status" value="1"/>
</dbReference>
<gene>
    <name evidence="1" type="primary">thrS</name>
    <name type="ordered locus">Ddes_0490</name>
</gene>
<sequence length="647" mass="72506">MEVRVEGQMVEGQAGDSVAAILQKALSGKKFKAVVAARALDSAEELLDLSSPVPAGCTGIEPVYADSPEGLQILRHSTAHVMAAAVKQLFPKTRVTIGPSIESGFYYDFDVEKPFSSEDFSAIEAEMQRIANAREPFTREVLSRAEAIERFKAMGEDYKVEIIEGIDADTVSVYTCSGFADLCRGPHVPHTGFAKASKLMSVAGAYWRGDEKNRMLSRIYGTAFADEKALAAYLKQMEEAKRRDHRKLGRELSLFTFKEDVAPGMVFWLPKGMLVRTILEDFWRKEHLKRGYDIVQGPQLLRVETWQKSGHYDHYRENMYFTQIEEDAYGVKPMNCISHMLIYGNELHSYRDLPQRYFELGVVHRHEKSGVLHGLLRVRQFTQDDAHIICAPEQLEGEILEVIHLIRDLMNLFGFEYKVAVSTRPESSIGTDEAWEMATSALVQAVEKAGLPYTINEGDGAFYGPKIDVRLLDCIGREWQCSTIQVDFTLPERFDLTYVGQDGERHRPVMVHRAIMGSLERFIGILVENFAGALPTWLAPEQARLLTVTEAGDEAVSSMLEEFKALGIRAQADTRNEKLGFKVREAQLAKVPYILVVGEKEVQAGGANVRLRNGDNLGLKSVAEIAALIRTDAEEPFKQGGMRYSFA</sequence>
<accession>B8J4E4</accession>
<reference key="1">
    <citation type="submission" date="2009-01" db="EMBL/GenBank/DDBJ databases">
        <title>Complete sequence of Desulfovibrio desulfuricans subsp. desulfuricans str. ATCC 27774.</title>
        <authorList>
            <consortium name="US DOE Joint Genome Institute"/>
            <person name="Lucas S."/>
            <person name="Copeland A."/>
            <person name="Lapidus A."/>
            <person name="Glavina del Rio T."/>
            <person name="Tice H."/>
            <person name="Bruce D."/>
            <person name="Goodwin L."/>
            <person name="Pitluck S."/>
            <person name="Sims D."/>
            <person name="Lu M."/>
            <person name="Kiss H."/>
            <person name="Meineke L."/>
            <person name="Brettin T."/>
            <person name="Detter J.C."/>
            <person name="Han C."/>
            <person name="Larimer F."/>
            <person name="Land M."/>
            <person name="Hauser L."/>
            <person name="Kyrpides N."/>
            <person name="Ovchinnikova G."/>
            <person name="Hazen T.C."/>
        </authorList>
    </citation>
    <scope>NUCLEOTIDE SEQUENCE [LARGE SCALE GENOMIC DNA]</scope>
    <source>
        <strain>ATCC 27774 / DSM 6949 / MB</strain>
    </source>
</reference>
<keyword id="KW-0030">Aminoacyl-tRNA synthetase</keyword>
<keyword id="KW-0067">ATP-binding</keyword>
<keyword id="KW-0963">Cytoplasm</keyword>
<keyword id="KW-0436">Ligase</keyword>
<keyword id="KW-0479">Metal-binding</keyword>
<keyword id="KW-0547">Nucleotide-binding</keyword>
<keyword id="KW-0648">Protein biosynthesis</keyword>
<keyword id="KW-0694">RNA-binding</keyword>
<keyword id="KW-0820">tRNA-binding</keyword>
<keyword id="KW-0862">Zinc</keyword>
<protein>
    <recommendedName>
        <fullName evidence="1">Threonine--tRNA ligase</fullName>
        <ecNumber evidence="1">6.1.1.3</ecNumber>
    </recommendedName>
    <alternativeName>
        <fullName evidence="1">Threonyl-tRNA synthetase</fullName>
        <shortName evidence="1">ThrRS</shortName>
    </alternativeName>
</protein>
<organism>
    <name type="scientific">Desulfovibrio desulfuricans (strain ATCC 27774 / DSM 6949 / MB)</name>
    <dbReference type="NCBI Taxonomy" id="525146"/>
    <lineage>
        <taxon>Bacteria</taxon>
        <taxon>Pseudomonadati</taxon>
        <taxon>Thermodesulfobacteriota</taxon>
        <taxon>Desulfovibrionia</taxon>
        <taxon>Desulfovibrionales</taxon>
        <taxon>Desulfovibrionaceae</taxon>
        <taxon>Desulfovibrio</taxon>
    </lineage>
</organism>
<evidence type="ECO:0000255" key="1">
    <source>
        <dbReference type="HAMAP-Rule" id="MF_00184"/>
    </source>
</evidence>
<evidence type="ECO:0000255" key="2">
    <source>
        <dbReference type="PROSITE-ProRule" id="PRU01228"/>
    </source>
</evidence>
<comment type="function">
    <text evidence="1">Catalyzes the attachment of threonine to tRNA(Thr) in a two-step reaction: L-threonine is first activated by ATP to form Thr-AMP and then transferred to the acceptor end of tRNA(Thr). Also edits incorrectly charged L-seryl-tRNA(Thr).</text>
</comment>
<comment type="catalytic activity">
    <reaction evidence="1">
        <text>tRNA(Thr) + L-threonine + ATP = L-threonyl-tRNA(Thr) + AMP + diphosphate + H(+)</text>
        <dbReference type="Rhea" id="RHEA:24624"/>
        <dbReference type="Rhea" id="RHEA-COMP:9670"/>
        <dbReference type="Rhea" id="RHEA-COMP:9704"/>
        <dbReference type="ChEBI" id="CHEBI:15378"/>
        <dbReference type="ChEBI" id="CHEBI:30616"/>
        <dbReference type="ChEBI" id="CHEBI:33019"/>
        <dbReference type="ChEBI" id="CHEBI:57926"/>
        <dbReference type="ChEBI" id="CHEBI:78442"/>
        <dbReference type="ChEBI" id="CHEBI:78534"/>
        <dbReference type="ChEBI" id="CHEBI:456215"/>
        <dbReference type="EC" id="6.1.1.3"/>
    </reaction>
</comment>
<comment type="cofactor">
    <cofactor evidence="1">
        <name>Zn(2+)</name>
        <dbReference type="ChEBI" id="CHEBI:29105"/>
    </cofactor>
    <text evidence="1">Binds 1 zinc ion per subunit.</text>
</comment>
<comment type="subunit">
    <text evidence="1">Homodimer.</text>
</comment>
<comment type="subcellular location">
    <subcellularLocation>
        <location evidence="1">Cytoplasm</location>
    </subcellularLocation>
</comment>
<comment type="similarity">
    <text evidence="1">Belongs to the class-II aminoacyl-tRNA synthetase family.</text>
</comment>
<name>SYT_DESDA</name>
<proteinExistence type="inferred from homology"/>
<feature type="chain" id="PRO_1000199541" description="Threonine--tRNA ligase">
    <location>
        <begin position="1"/>
        <end position="647"/>
    </location>
</feature>
<feature type="domain" description="TGS" evidence="2">
    <location>
        <begin position="1"/>
        <end position="63"/>
    </location>
</feature>
<feature type="region of interest" description="Catalytic" evidence="1">
    <location>
        <begin position="244"/>
        <end position="535"/>
    </location>
</feature>
<feature type="binding site" evidence="1">
    <location>
        <position position="336"/>
    </location>
    <ligand>
        <name>Zn(2+)</name>
        <dbReference type="ChEBI" id="CHEBI:29105"/>
    </ligand>
</feature>
<feature type="binding site" evidence="1">
    <location>
        <position position="387"/>
    </location>
    <ligand>
        <name>Zn(2+)</name>
        <dbReference type="ChEBI" id="CHEBI:29105"/>
    </ligand>
</feature>
<feature type="binding site" evidence="1">
    <location>
        <position position="512"/>
    </location>
    <ligand>
        <name>Zn(2+)</name>
        <dbReference type="ChEBI" id="CHEBI:29105"/>
    </ligand>
</feature>